<feature type="chain" id="PRO_0000453533" description="Methylmalonyl-CoA decarboxylase subunit alpha">
    <location>
        <begin position="1"/>
        <end position="509"/>
    </location>
</feature>
<feature type="domain" description="CoA carboxyltransferase N-terminal" evidence="1">
    <location>
        <begin position="4"/>
        <end position="260"/>
    </location>
</feature>
<feature type="domain" description="CoA carboxyltransferase C-terminal" evidence="2">
    <location>
        <begin position="267"/>
        <end position="503"/>
    </location>
</feature>
<proteinExistence type="evidence at protein level"/>
<gene>
    <name evidence="12" type="primary">mmdA</name>
    <name evidence="17" type="ORF">CYK26_07570</name>
    <name evidence="18" type="ORF">DWV36_05400</name>
    <name evidence="14" type="ORF">FNLLGLLA_00681</name>
    <name evidence="16" type="ORF">GL281_04675</name>
    <name evidence="15" type="ORF">HMPREF1865_00706</name>
</gene>
<keyword id="KW-1003">Cell membrane</keyword>
<keyword id="KW-0903">Direct protein sequencing</keyword>
<keyword id="KW-0406">Ion transport</keyword>
<keyword id="KW-0472">Membrane</keyword>
<keyword id="KW-0915">Sodium</keyword>
<keyword id="KW-0739">Sodium transport</keyword>
<keyword id="KW-1278">Translocase</keyword>
<keyword id="KW-0813">Transport</keyword>
<comment type="function">
    <text evidence="3 4 5 7 8 9">Carboxyltransferase subunit of the sodium ion pump methylmalonyl-CoA decarboxylase, which converts the chemical energy of a decarboxylation reaction into an electrochemical gradient of Na(+) ions across the cytoplasmic membrane, thereby creating a sodium ion motive force that is used for ATP synthesis. The alpha subunit catalyzes the Na(+)-independent carboxyltransfer from methylmalonyl-CoA to the prosthetic biotin group located on the gamma subunit (PubMed:1991479, PubMed:2920730, PubMed:3609308, PubMed:6852015, PubMed:7070502, PubMed:7601825). Can also convert malonyl-CoA into acetyl-CoA (PubMed:2920730, PubMed:6852015).</text>
</comment>
<comment type="catalytic activity">
    <reaction evidence="4 7 9">
        <text>(S)-methylmalonyl-CoA + Na(+)(in) + H(+)(out) = propanoyl-CoA + Na(+)(out) + CO2</text>
        <dbReference type="Rhea" id="RHEA:21396"/>
        <dbReference type="ChEBI" id="CHEBI:15378"/>
        <dbReference type="ChEBI" id="CHEBI:16526"/>
        <dbReference type="ChEBI" id="CHEBI:29101"/>
        <dbReference type="ChEBI" id="CHEBI:57327"/>
        <dbReference type="ChEBI" id="CHEBI:57392"/>
        <dbReference type="EC" id="7.2.4.3"/>
    </reaction>
</comment>
<comment type="activity regulation">
    <text evidence="7 9">Completely inhibited by avidin.</text>
</comment>
<comment type="biophysicochemical properties">
    <kinetics>
        <KM evidence="7">7 uM for (S)-methylmalonyl-CoA</KM>
        <KM evidence="7">35 uM for malonyl-CoA</KM>
        <KM evidence="7">0.6 mM for Na(+)</KM>
    </kinetics>
    <phDependence>
        <text evidence="7">Optimum pH is 6.4-7.0.</text>
    </phDependence>
</comment>
<comment type="subunit">
    <text evidence="9 10">The methylmalonyl-CoA decarboxylase is composed of five subunits: the carboxyltransferase alpha subunit (MmdA), the tunnel beta subunit (MmdB), the biotin-containing gamma subunit (MmdC), and the delta (MmdD) and epsilon (MmdE) subunits (PubMed:7601825, PubMed:8227015). Interacts with the gamma subunit (PubMed:7601825).</text>
</comment>
<comment type="subcellular location">
    <subcellularLocation>
        <location evidence="6 7 8 11">Cell membrane</location>
    </subcellularLocation>
</comment>
<comment type="similarity">
    <text evidence="13">Belongs to the AccD/PCCB family.</text>
</comment>
<dbReference type="EC" id="7.2.4.3" evidence="4 7 9"/>
<dbReference type="EMBL" id="L22208">
    <property type="protein sequence ID" value="AAC36820.1"/>
    <property type="molecule type" value="Unassigned_DNA"/>
</dbReference>
<dbReference type="EMBL" id="Z24754">
    <property type="protein sequence ID" value="CAA80872.1"/>
    <property type="molecule type" value="Genomic_DNA"/>
</dbReference>
<dbReference type="EMBL" id="LSDP01000020">
    <property type="protein sequence ID" value="KXB86198.1"/>
    <property type="molecule type" value="Genomic_DNA"/>
</dbReference>
<dbReference type="EMBL" id="PKHW01000004">
    <property type="protein sequence ID" value="PKZ92514.1"/>
    <property type="molecule type" value="Genomic_DNA"/>
</dbReference>
<dbReference type="EMBL" id="QSBH01000003">
    <property type="protein sequence ID" value="RGX04059.1"/>
    <property type="molecule type" value="Genomic_DNA"/>
</dbReference>
<dbReference type="EMBL" id="WMKL01000003">
    <property type="protein sequence ID" value="MTH56717.1"/>
    <property type="molecule type" value="Genomic_DNA"/>
</dbReference>
<dbReference type="EMBL" id="LR778174">
    <property type="protein sequence ID" value="CAB1275121.1"/>
    <property type="molecule type" value="Genomic_DNA"/>
</dbReference>
<dbReference type="PIR" id="A49094">
    <property type="entry name" value="A49094"/>
</dbReference>
<dbReference type="RefSeq" id="WP_004696486.1">
    <property type="nucleotide sequence ID" value="NZ_CABFMP010000005.1"/>
</dbReference>
<dbReference type="SMR" id="Q57079"/>
<dbReference type="STRING" id="29466.GCA_002005185_01895"/>
<dbReference type="TCDB" id="3.B.1.1.2">
    <property type="family name" value="the na(+)-transporting carboxylic acid decarboxylase (nat-dc) family"/>
</dbReference>
<dbReference type="PATRIC" id="fig|29466.15.peg.694"/>
<dbReference type="BioCyc" id="MetaCyc:MONOMER-21717"/>
<dbReference type="GO" id="GO:0005886">
    <property type="term" value="C:plasma membrane"/>
    <property type="evidence" value="ECO:0007669"/>
    <property type="project" value="UniProtKB-SubCell"/>
</dbReference>
<dbReference type="GO" id="GO:0004658">
    <property type="term" value="F:propionyl-CoA carboxylase activity"/>
    <property type="evidence" value="ECO:0007669"/>
    <property type="project" value="TreeGrafter"/>
</dbReference>
<dbReference type="GO" id="GO:0006814">
    <property type="term" value="P:sodium ion transport"/>
    <property type="evidence" value="ECO:0007669"/>
    <property type="project" value="UniProtKB-KW"/>
</dbReference>
<dbReference type="FunFam" id="3.90.226.10:FF:000017">
    <property type="entry name" value="Propionyl-CoA carboxylase subunit beta 5"/>
    <property type="match status" value="1"/>
</dbReference>
<dbReference type="FunFam" id="3.90.226.10:FF:000016">
    <property type="entry name" value="Propionyl-CoA carboxylase, beta subunit"/>
    <property type="match status" value="1"/>
</dbReference>
<dbReference type="Gene3D" id="3.90.226.10">
    <property type="entry name" value="2-enoyl-CoA Hydratase, Chain A, domain 1"/>
    <property type="match status" value="2"/>
</dbReference>
<dbReference type="InterPro" id="IPR051047">
    <property type="entry name" value="AccD/PCCB"/>
</dbReference>
<dbReference type="InterPro" id="IPR034733">
    <property type="entry name" value="AcCoA_carboxyl_beta"/>
</dbReference>
<dbReference type="InterPro" id="IPR029045">
    <property type="entry name" value="ClpP/crotonase-like_dom_sf"/>
</dbReference>
<dbReference type="InterPro" id="IPR011763">
    <property type="entry name" value="COA_CT_C"/>
</dbReference>
<dbReference type="InterPro" id="IPR011762">
    <property type="entry name" value="COA_CT_N"/>
</dbReference>
<dbReference type="InterPro" id="IPR005783">
    <property type="entry name" value="MemalonylCoA_decase_suA"/>
</dbReference>
<dbReference type="NCBIfam" id="TIGR01117">
    <property type="entry name" value="mmdA"/>
    <property type="match status" value="1"/>
</dbReference>
<dbReference type="PANTHER" id="PTHR43842">
    <property type="entry name" value="PROPIONYL-COA CARBOXYLASE BETA CHAIN"/>
    <property type="match status" value="1"/>
</dbReference>
<dbReference type="PANTHER" id="PTHR43842:SF2">
    <property type="entry name" value="PROPIONYL-COA CARBOXYLASE BETA CHAIN, MITOCHONDRIAL"/>
    <property type="match status" value="1"/>
</dbReference>
<dbReference type="Pfam" id="PF01039">
    <property type="entry name" value="Carboxyl_trans"/>
    <property type="match status" value="1"/>
</dbReference>
<dbReference type="SUPFAM" id="SSF52096">
    <property type="entry name" value="ClpP/crotonase"/>
    <property type="match status" value="2"/>
</dbReference>
<dbReference type="PROSITE" id="PS50989">
    <property type="entry name" value="COA_CT_CTER"/>
    <property type="match status" value="1"/>
</dbReference>
<dbReference type="PROSITE" id="PS50980">
    <property type="entry name" value="COA_CT_NTER"/>
    <property type="match status" value="1"/>
</dbReference>
<name>MMDA_VEIPA</name>
<sequence length="509" mass="55101">MATVQEKIELLHEKLAKVKAGGGEKRVEKQHAQGKMTARERLAKLFDDNSFVELDQFVKHRCVNFGQEKKELPGEGVVTGYGTIDGRLVYAFAQDFTVEGGSLGEMHAAKIVKVQRLAMKMGAPIVGINDSGGARIQEAVDALAGYGKIFFENTNASGVIPQISVIMGPCAGGAVYSPALTDFIYMVKNTSQMFITGPAVIKSVTGEEVTAEDLGGAMAHNSVSGVAHFAAENEDDCIAQIRYLLGFLPSNNMEDAPLVDTGDDPTREDESLNSLLPDNSNMPYDMKDVIAATVDNGEYYEVQPFYATNIITCFARFDGQSVGIIANQPKVMAGCLDINASDKSSRFIRFCDAFNIPIVNFVDVPGFLPGTNQEWGGIIRHGAKMLYAYSEATVPKITVITRKAYGGSYLAMCSQDLGADQVYAWPTSEIAVMGPAGAANIIFKKDEDKDAKTAKYVEEFATPYKAAERGFVDVVIEPKQTRPAVINALAMLASKRENRAPKKHGNIPL</sequence>
<protein>
    <recommendedName>
        <fullName evidence="13">Methylmalonyl-CoA decarboxylase subunit alpha</fullName>
        <ecNumber evidence="4 7 9">7.2.4.3</ecNumber>
    </recommendedName>
    <alternativeName>
        <fullName evidence="13">Carboxyltransferase</fullName>
    </alternativeName>
</protein>
<organism>
    <name type="scientific">Veillonella parvula</name>
    <name type="common">Staphylococcus parvulus</name>
    <dbReference type="NCBI Taxonomy" id="29466"/>
    <lineage>
        <taxon>Bacteria</taxon>
        <taxon>Bacillati</taxon>
        <taxon>Bacillota</taxon>
        <taxon>Negativicutes</taxon>
        <taxon>Veillonellales</taxon>
        <taxon>Veillonellaceae</taxon>
        <taxon>Veillonella</taxon>
    </lineage>
</organism>
<evidence type="ECO:0000255" key="1">
    <source>
        <dbReference type="PROSITE-ProRule" id="PRU01136"/>
    </source>
</evidence>
<evidence type="ECO:0000255" key="2">
    <source>
        <dbReference type="PROSITE-ProRule" id="PRU01137"/>
    </source>
</evidence>
<evidence type="ECO:0000269" key="3">
    <source>
    </source>
</evidence>
<evidence type="ECO:0000269" key="4">
    <source>
    </source>
</evidence>
<evidence type="ECO:0000269" key="5">
    <source>
    </source>
</evidence>
<evidence type="ECO:0000269" key="6">
    <source>
    </source>
</evidence>
<evidence type="ECO:0000269" key="7">
    <source>
    </source>
</evidence>
<evidence type="ECO:0000269" key="8">
    <source>
    </source>
</evidence>
<evidence type="ECO:0000269" key="9">
    <source>
    </source>
</evidence>
<evidence type="ECO:0000269" key="10">
    <source>
    </source>
</evidence>
<evidence type="ECO:0000269" key="11">
    <source ref="10"/>
</evidence>
<evidence type="ECO:0000303" key="12">
    <source>
    </source>
</evidence>
<evidence type="ECO:0000305" key="13"/>
<evidence type="ECO:0000312" key="14">
    <source>
        <dbReference type="EMBL" id="CAB1275121.1"/>
    </source>
</evidence>
<evidence type="ECO:0000312" key="15">
    <source>
        <dbReference type="EMBL" id="KXB86198.1"/>
    </source>
</evidence>
<evidence type="ECO:0000312" key="16">
    <source>
        <dbReference type="EMBL" id="MTH56717.1"/>
    </source>
</evidence>
<evidence type="ECO:0000312" key="17">
    <source>
        <dbReference type="EMBL" id="PKZ92514.1"/>
    </source>
</evidence>
<evidence type="ECO:0000312" key="18">
    <source>
        <dbReference type="EMBL" id="RGX04059.1"/>
    </source>
</evidence>
<accession>Q57079</accession>
<reference key="1">
    <citation type="journal article" date="1993" name="J. Biol. Chem.">
        <title>Sequence of the sodium ion pump methylmalonyl-CoA decarboxylase from Veillonella parvula.</title>
        <authorList>
            <person name="Huder J.B."/>
            <person name="Dimroth P."/>
        </authorList>
    </citation>
    <scope>NUCLEOTIDE SEQUENCE [GENOMIC DNA]</scope>
    <scope>PROTEIN SEQUENCE OF 1-11</scope>
    <scope>SUBUNIT</scope>
    <source>
        <strain>ATCC 17745</strain>
    </source>
</reference>
<reference key="2">
    <citation type="submission" date="2016-01" db="EMBL/GenBank/DDBJ databases">
        <authorList>
            <person name="Mitreva M."/>
            <person name="Pepin K.H."/>
            <person name="Mihindukulasuriya K.A."/>
            <person name="Fulton R."/>
            <person name="Fronick C."/>
            <person name="O'Laughlin M."/>
            <person name="Miner T."/>
            <person name="Herter B."/>
            <person name="Rosa B.A."/>
            <person name="Cordes M."/>
            <person name="Tomlinson C."/>
            <person name="Wollam A."/>
            <person name="Palsikar V.B."/>
            <person name="Mardis E.R."/>
            <person name="Wilson R.K."/>
        </authorList>
    </citation>
    <scope>NUCLEOTIDE SEQUENCE [LARGE SCALE GENOMIC DNA]</scope>
    <source>
        <strain>DNF00876</strain>
    </source>
</reference>
<reference key="3">
    <citation type="submission" date="2017-12" db="EMBL/GenBank/DDBJ databases">
        <title>Phylogenetic diversity of female urinary microbiome.</title>
        <authorList>
            <person name="Thomas-White K."/>
            <person name="Wolfe A.J."/>
        </authorList>
    </citation>
    <scope>NUCLEOTIDE SEQUENCE [LARGE SCALE GENOMIC DNA]</scope>
    <source>
        <strain>UMB0371</strain>
    </source>
</reference>
<reference key="4">
    <citation type="submission" date="2018-08" db="EMBL/GenBank/DDBJ databases">
        <title>A genome reference for cultivated species of the human gut microbiota.</title>
        <authorList>
            <person name="Zou Y."/>
            <person name="Xue W."/>
            <person name="Luo G."/>
        </authorList>
    </citation>
    <scope>NUCLEOTIDE SEQUENCE [LARGE SCALE GENOMIC DNA]</scope>
    <source>
        <strain>AF04-47</strain>
    </source>
</reference>
<reference key="5">
    <citation type="journal article" date="2019" name="Nat. Med.">
        <title>A library of human gut bacterial isolates paired with longitudinal multiomics data enables mechanistic microbiome research.</title>
        <authorList>
            <person name="Poyet M."/>
            <person name="Groussin M."/>
            <person name="Gibbons S.M."/>
            <person name="Avila-Pacheco J."/>
            <person name="Jiang X."/>
            <person name="Kearney S.M."/>
            <person name="Perrotta A.R."/>
            <person name="Berdy B."/>
            <person name="Zhao S."/>
            <person name="Lieberman T.D."/>
            <person name="Swanson P.K."/>
            <person name="Smith M."/>
            <person name="Roesemann S."/>
            <person name="Alexander J.E."/>
            <person name="Rich S.A."/>
            <person name="Livny J."/>
            <person name="Vlamakis H."/>
            <person name="Clish C."/>
            <person name="Bullock K."/>
            <person name="Deik A."/>
            <person name="Scott J."/>
            <person name="Pierce K.A."/>
            <person name="Xavier R.J."/>
            <person name="Alm E.J."/>
        </authorList>
    </citation>
    <scope>NUCLEOTIDE SEQUENCE [LARGE SCALE GENOMIC DNA]</scope>
    <source>
        <strain>BIOML-A2</strain>
    </source>
</reference>
<reference key="6">
    <citation type="submission" date="2020-03" db="EMBL/GenBank/DDBJ databases">
        <authorList>
            <person name="Beloin C."/>
        </authorList>
    </citation>
    <scope>NUCLEOTIDE SEQUENCE [LARGE SCALE GENOMIC DNA]</scope>
    <source>
        <strain>SKV38</strain>
    </source>
</reference>
<reference key="7">
    <citation type="journal article" date="1982" name="Nature">
        <title>Conversion of the chemical energy of methylmalonyl-CoA decarboxylation into a Na+ gradient.</title>
        <authorList>
            <person name="Hilpert W."/>
            <person name="Dimroth P."/>
        </authorList>
    </citation>
    <scope>FUNCTION</scope>
    <scope>SUBCELLULAR LOCATION</scope>
</reference>
<reference key="8">
    <citation type="journal article" date="1983" name="Eur. J. Biochem.">
        <title>Purification and characterization of a new sodium-transport decarboxylase. Methylmalonyl-CoA decarboxylase from Veillonella alcalescens.</title>
        <authorList>
            <person name="Hilpert W."/>
            <person name="Dimroth P."/>
        </authorList>
    </citation>
    <scope>FUNCTION</scope>
    <scope>CATALYTIC ACTIVITY</scope>
    <scope>BIOPHYSICOCHEMICAL PROPERTIES</scope>
    <scope>ACTIVITY REGULATION</scope>
    <scope>SUBCELLULAR LOCATION</scope>
    <source>
        <strain>ATCC 17745</strain>
    </source>
</reference>
<reference key="9">
    <citation type="journal article" date="1984" name="Eur. J. Biochem.">
        <title>Reconstitution of Na+ transport from purified methylmalonyl-CoA decarboxylase and phospholipid vesicles.</title>
        <authorList>
            <person name="Hilpert W."/>
            <person name="Dimroth P."/>
        </authorList>
    </citation>
    <scope>SUBCELLULAR LOCATION</scope>
    <source>
        <strain>ATCC 17745</strain>
    </source>
</reference>
<reference key="10">
    <citation type="journal article" date="1986" name="FEBS Lett.">
        <title>Morphological properties of proteoliposomes reconstituted with the Na+ pump methylmalonyl-CoA decarboxylase from Veillonella alcalescens.</title>
        <authorList>
            <person name="Rohde M."/>
            <person name="Dakena P."/>
            <person name="Mayer F."/>
            <person name="Dimroth P."/>
        </authorList>
    </citation>
    <scope>SUBCELLULAR LOCATION</scope>
</reference>
<reference key="11">
    <citation type="journal article" date="1987" name="FEBS Lett.">
        <title>Stereochemistry of the methylmalonyl-CoA decarboxylation reaction.</title>
        <authorList>
            <person name="Hoffmann A."/>
            <person name="Dimroth P."/>
        </authorList>
    </citation>
    <scope>FUNCTION</scope>
</reference>
<reference key="12">
    <citation type="journal article" date="1989" name="Eur. J. Biochem.">
        <title>The carboxyltransferase activity of the sodium-ion-translocating methylmalonyl-CoA decarboxylase of Veillonella alcalescens.</title>
        <authorList>
            <person name="Hoffmann A."/>
            <person name="Hilpert W."/>
            <person name="Dimroth P."/>
        </authorList>
    </citation>
    <scope>FUNCTION</scope>
    <scope>CATALYTIC ACTIVITY</scope>
    <source>
        <strain>ATCC 17745</strain>
    </source>
</reference>
<reference key="13">
    <citation type="journal article" date="1991" name="Eur. J. Biochem.">
        <title>On the mechanism of sodium ion translocation by methylmalonyl-CoA decarboxylase from Veillonella alcalescens.</title>
        <authorList>
            <person name="Hilpert W."/>
            <person name="Dimroth P."/>
        </authorList>
    </citation>
    <scope>FUNCTION</scope>
    <source>
        <strain>ATCC 17745</strain>
    </source>
</reference>
<reference key="14">
    <citation type="journal article" date="1995" name="J. Bacteriol.">
        <title>Expression of the sodium ion pump methylmalonyl-coenzyme A-decarboxylase from Veillonella parvula and of mutated enzyme specimens in Escherichia coli.</title>
        <authorList>
            <person name="Huder J.B."/>
            <person name="Dimroth P."/>
        </authorList>
    </citation>
    <scope>FUNCTION</scope>
    <scope>CATALYTIC ACTIVITY</scope>
    <scope>ACTIVITY REGULATION</scope>
    <scope>SUBUNIT</scope>
</reference>